<proteinExistence type="inferred from homology"/>
<feature type="chain" id="PRO_0000368076" description="Protein VP3">
    <location>
        <begin position="1"/>
        <end position="835"/>
    </location>
</feature>
<feature type="region of interest" description="N7-methyltransferase activity" evidence="1">
    <location>
        <begin position="171"/>
        <end position="245"/>
    </location>
</feature>
<feature type="region of interest" description="2'-O-methyltransferase activity" evidence="1">
    <location>
        <begin position="246"/>
        <end position="428"/>
    </location>
</feature>
<feature type="region of interest" description="N7-methyltransferase activity" evidence="1">
    <location>
        <begin position="429"/>
        <end position="555"/>
    </location>
</feature>
<feature type="region of interest" description="GTase/RTPase activity" evidence="1">
    <location>
        <begin position="556"/>
        <end position="692"/>
    </location>
</feature>
<feature type="region of interest" description="2'-5'-phosphodiesterase activity" evidence="1">
    <location>
        <begin position="693"/>
        <end position="835"/>
    </location>
</feature>
<feature type="active site" description="For 2'-5'-phosphodiesterase activity" evidence="1">
    <location>
        <position position="718"/>
    </location>
</feature>
<feature type="active site" description="For 2'-5'-phosphodiesterase activity" evidence="1">
    <location>
        <position position="720"/>
    </location>
</feature>
<feature type="active site" description="For 2'-5'-phosphodiesterase activity" evidence="1">
    <location>
        <position position="797"/>
    </location>
</feature>
<feature type="active site" description="For 2'-5'-phosphodiesterase activity" evidence="1">
    <location>
        <position position="799"/>
    </location>
</feature>
<organismHost>
    <name type="scientific">Bos taurus</name>
    <name type="common">Bovine</name>
    <dbReference type="NCBI Taxonomy" id="9913"/>
</organismHost>
<keyword id="KW-0342">GTP-binding</keyword>
<keyword id="KW-0945">Host-virus interaction</keyword>
<keyword id="KW-0378">Hydrolase</keyword>
<keyword id="KW-1090">Inhibition of host innate immune response by virus</keyword>
<keyword id="KW-0489">Methyltransferase</keyword>
<keyword id="KW-0506">mRNA capping</keyword>
<keyword id="KW-0507">mRNA processing</keyword>
<keyword id="KW-0511">Multifunctional enzyme</keyword>
<keyword id="KW-0547">Nucleotide-binding</keyword>
<keyword id="KW-0548">Nucleotidyltransferase</keyword>
<keyword id="KW-0694">RNA-binding</keyword>
<keyword id="KW-0949">S-adenosyl-L-methionine</keyword>
<keyword id="KW-0808">Transferase</keyword>
<keyword id="KW-0899">Viral immunoevasion</keyword>
<keyword id="KW-0946">Virion</keyword>
<evidence type="ECO:0000255" key="1">
    <source>
        <dbReference type="HAMAP-Rule" id="MF_04128"/>
    </source>
</evidence>
<name>VP3_ROTW3</name>
<sequence>MKVLALRHSVAQVYADTQIYTHDETKDDYENAFLISNLTTHNILYLNYSVKTLQILNKSGIAAVEIQEMDELFTLIRCNFTYDYIDDIVYLHDYSYYTNNEIRTDQHWVTKTNIEDYLLPGWKLTYVGYNGNDTRGHYNFSFKCQNAATDDDAIIEYIYSNELDFQNFILKKIKERMTTSLPIARLSNRVFRDKLFKTLVSDHSRVVNVGPRNESMFTFLDHPSIKQFSNGPYLVKDTIKLKQERWLGKRLSQFDIGQYKNMLNVLTTLYQYYDMYHEKPIIYMVGSAPSYWIHDVRQYSNLKFETWDPLDTPYSDLHHKELFYISDVTKLKDNSILYVDIRTDRENTDWKAWRKIVEEQTINNLNIAYKYLSTGKAKVCCVKMTAMDLELPISAKLLHHPTTEIRSEFYLIMDIWDSKNIKRFIPKGVLYSYINNVITENVFIQQPFKLKTLRNEYVVALYALSNDFNNREDVIKLVNNQKNALITVRINNTFKDEPKVGFKDIYDWTFLPTDFETNESIITSYDGCLGMFGLSISLASKPTGNNHLFILSGTNKYFKLDQFANHMSISRRSHQIRFSESATSYSGYIFRDLSNNNFNLIGTNVENSVSGHVYNALIYYRYNYSFDLKRWIYLHATNKAGIEGGRYYEHAPIELIYACRSAKEFAKLQDDLTVLRYSNEIEDYINKVYSITYADDPNYFIGIKFKNIPYEYDVKVPHLTFGVLNISDSMVPDVVAILKKFKSELFRMDVTTSYTYMLSDEIYVANVSGVLSTYFKLYNAFYKEQITFGQSRMFIPHITLSFSNKKVVRIDSTRLNIDFIYLRKIKGDTVFDMTE</sequence>
<comment type="function">
    <text evidence="1">Multifunctional enzyme involved in mRNA capping. Catalyzes the formation of the 5' cap structure on the viral plus-strand transcripts. Specifically binds to GTP and displays guanylyltransferase and methyltransferase activities. Has affinity for ssRNA but not for dsRNA. Capping activity is non-specific and caps RNAs that initiate with either a G or an A residue. Together with VP1 polymerase, forms a VP1-VP3 complex positioned near the channels situated at each of the five-fold vertices of the core. Following infection, the outermost layer of the virus is lost, leaving a double-layered particle (DLP) made up of the core and VP6 shell. VP1 then catalyzes the transcription of fully conservative plus-strand genomic RNAs that are capped by VP3 and extruded through the DLP's channels into the cytoplasm where they function as mRNAs for translation of viral proteins. DLPs probably have an RNA triphosphatase activity as well, whereas open cores do not.</text>
</comment>
<comment type="function">
    <text evidence="1">Counteracts the host innate immune response thanks to its phosphodiesterase that degrades the 5'-triphosphorylated, 2'-5' linked adenylate oligomers produced by the host cell IFN-inducible 2',5'-oligoadenylate synthetase (OAS). The host RNaseL is therefore not activated.</text>
</comment>
<comment type="catalytic activity">
    <reaction evidence="1">
        <text>a 5'-end diphospho-ribonucleoside in mRNA + GTP + H(+) = a 5'-end (5'-triphosphoguanosine)-ribonucleoside in mRNA + diphosphate</text>
        <dbReference type="Rhea" id="RHEA:67012"/>
        <dbReference type="Rhea" id="RHEA-COMP:17165"/>
        <dbReference type="Rhea" id="RHEA-COMP:17166"/>
        <dbReference type="ChEBI" id="CHEBI:15378"/>
        <dbReference type="ChEBI" id="CHEBI:33019"/>
        <dbReference type="ChEBI" id="CHEBI:37565"/>
        <dbReference type="ChEBI" id="CHEBI:167616"/>
        <dbReference type="ChEBI" id="CHEBI:167617"/>
        <dbReference type="EC" id="2.7.7.50"/>
    </reaction>
</comment>
<comment type="catalytic activity">
    <reaction evidence="1">
        <text>a 5'-end (5'-triphosphoguanosine)-ribonucleoside in mRNA + S-adenosyl-L-methionine = a 5'-end (N(7)-methyl 5'-triphosphoguanosine)-ribonucleoside in mRNA + S-adenosyl-L-homocysteine</text>
        <dbReference type="Rhea" id="RHEA:67008"/>
        <dbReference type="Rhea" id="RHEA-COMP:17166"/>
        <dbReference type="Rhea" id="RHEA-COMP:17167"/>
        <dbReference type="ChEBI" id="CHEBI:57856"/>
        <dbReference type="ChEBI" id="CHEBI:59789"/>
        <dbReference type="ChEBI" id="CHEBI:156461"/>
        <dbReference type="ChEBI" id="CHEBI:167617"/>
        <dbReference type="EC" id="2.1.1.56"/>
    </reaction>
</comment>
<comment type="catalytic activity">
    <reaction evidence="1">
        <text>5'-triphosphoadenylyl-(2'-&gt;5')-adenylyl-(2'-&gt;5')-adenosine + 2 H2O = 2 AMP + ATP + 2 H(+)</text>
        <dbReference type="Rhea" id="RHEA:45964"/>
        <dbReference type="ChEBI" id="CHEBI:15377"/>
        <dbReference type="ChEBI" id="CHEBI:15378"/>
        <dbReference type="ChEBI" id="CHEBI:30616"/>
        <dbReference type="ChEBI" id="CHEBI:67143"/>
        <dbReference type="ChEBI" id="CHEBI:456215"/>
    </reaction>
</comment>
<comment type="subunit">
    <text evidence="1">Interacts with VP1. Interacts with VP2.</text>
</comment>
<comment type="subcellular location">
    <subcellularLocation>
        <location evidence="1">Virion</location>
    </subcellularLocation>
    <text evidence="1">Attached inside the inner capsid as a minor component. There are about 11 to 12 copies per virion.</text>
</comment>
<comment type="domain">
    <text evidence="1">Contains a bipartite N7-methyltransferase domain, a 2'-O-methyltransferase domain and a GTase/RTPase domain. The C-terminus contains a phosphodiesterase domain that degrades the 5'-triphosphorylated, 2'-5' linked adenylate oligomers produced by the host cell in response to IFN stimulation.</text>
</comment>
<comment type="similarity">
    <text evidence="1">Belongs to the rotavirus VP3 family.</text>
</comment>
<reference key="1">
    <citation type="journal article" date="2008" name="J. Virol.">
        <title>Full genome-based classification of rotaviruses reveals a common origin between human Wa-Like and porcine rotavirus strains and human DS-1-like and bovine rotavirus strains.</title>
        <authorList>
            <person name="Matthijnssens J."/>
            <person name="Ciarlet M."/>
            <person name="Heiman E.M."/>
            <person name="Arijs I."/>
            <person name="Delbeke T."/>
            <person name="McDonald S.M."/>
            <person name="Palombo E.A."/>
            <person name="Iturriza-Gomara M."/>
            <person name="Maes P."/>
            <person name="Patton J.T."/>
            <person name="Rahman M."/>
            <person name="Van Ranst M."/>
        </authorList>
    </citation>
    <scope>NUCLEOTIDE SEQUENCE [GENOMIC RNA]</scope>
</reference>
<organism>
    <name type="scientific">Rotavirus A (strain RVA/Cow/United States/WC3/1981/G6P7[5])</name>
    <name type="common">RV-A</name>
    <name type="synonym">Rotavirus (strain Wistar calf 3)</name>
    <dbReference type="NCBI Taxonomy" id="578828"/>
    <lineage>
        <taxon>Viruses</taxon>
        <taxon>Riboviria</taxon>
        <taxon>Orthornavirae</taxon>
        <taxon>Duplornaviricota</taxon>
        <taxon>Resentoviricetes</taxon>
        <taxon>Reovirales</taxon>
        <taxon>Sedoreoviridae</taxon>
        <taxon>Rotavirus</taxon>
        <taxon>Rotavirus A</taxon>
    </lineage>
</organism>
<protein>
    <recommendedName>
        <fullName evidence="1">Protein VP3</fullName>
    </recommendedName>
    <domain>
        <recommendedName>
            <fullName evidence="1">2',5'-phosphodiesterase</fullName>
            <ecNumber evidence="1">3.1.4.-</ecNumber>
        </recommendedName>
    </domain>
    <domain>
        <recommendedName>
            <fullName evidence="1">mRNA guanylyltransferase</fullName>
            <ecNumber evidence="1">2.7.7.50</ecNumber>
        </recommendedName>
    </domain>
    <domain>
        <recommendedName>
            <fullName evidence="1">mRNA (guanine-N(7))-methyltransferase</fullName>
            <ecNumber evidence="1">2.1.1.56</ecNumber>
        </recommendedName>
    </domain>
</protein>
<dbReference type="EC" id="3.1.4.-" evidence="1"/>
<dbReference type="EC" id="2.7.7.50" evidence="1"/>
<dbReference type="EC" id="2.1.1.56" evidence="1"/>
<dbReference type="EMBL" id="EF560617">
    <property type="protein sequence ID" value="ABU48678.1"/>
    <property type="molecule type" value="Genomic_RNA"/>
</dbReference>
<dbReference type="SMR" id="B2BMF9"/>
<dbReference type="Proteomes" id="UP000007181">
    <property type="component" value="Genome"/>
</dbReference>
<dbReference type="GO" id="GO:0019013">
    <property type="term" value="C:viral nucleocapsid"/>
    <property type="evidence" value="ECO:0007669"/>
    <property type="project" value="UniProtKB-UniRule"/>
</dbReference>
<dbReference type="GO" id="GO:0005525">
    <property type="term" value="F:GTP binding"/>
    <property type="evidence" value="ECO:0007669"/>
    <property type="project" value="UniProtKB-UniRule"/>
</dbReference>
<dbReference type="GO" id="GO:0016787">
    <property type="term" value="F:hydrolase activity"/>
    <property type="evidence" value="ECO:0007669"/>
    <property type="project" value="UniProtKB-KW"/>
</dbReference>
<dbReference type="GO" id="GO:0004482">
    <property type="term" value="F:mRNA 5'-cap (guanine-N7-)-methyltransferase activity"/>
    <property type="evidence" value="ECO:0007669"/>
    <property type="project" value="UniProtKB-UniRule"/>
</dbReference>
<dbReference type="GO" id="GO:0004484">
    <property type="term" value="F:mRNA guanylyltransferase activity"/>
    <property type="evidence" value="ECO:0007669"/>
    <property type="project" value="UniProtKB-UniRule"/>
</dbReference>
<dbReference type="GO" id="GO:0003723">
    <property type="term" value="F:RNA binding"/>
    <property type="evidence" value="ECO:0007669"/>
    <property type="project" value="UniProtKB-UniRule"/>
</dbReference>
<dbReference type="GO" id="GO:0052170">
    <property type="term" value="P:symbiont-mediated suppression of host innate immune response"/>
    <property type="evidence" value="ECO:0007669"/>
    <property type="project" value="UniProtKB-KW"/>
</dbReference>
<dbReference type="GO" id="GO:0016032">
    <property type="term" value="P:viral process"/>
    <property type="evidence" value="ECO:0007669"/>
    <property type="project" value="UniProtKB-UniRule"/>
</dbReference>
<dbReference type="CDD" id="cd20757">
    <property type="entry name" value="capping_2-OMTase_Rotavirus"/>
    <property type="match status" value="1"/>
</dbReference>
<dbReference type="HAMAP" id="MF_04124">
    <property type="entry name" value="Rota_VP3"/>
    <property type="match status" value="1"/>
</dbReference>
<dbReference type="HAMAP" id="MF_04128">
    <property type="entry name" value="Rota_VP3_A"/>
    <property type="match status" value="1"/>
</dbReference>
<dbReference type="InterPro" id="IPR011181">
    <property type="entry name" value="VP3_Rotav"/>
</dbReference>
<dbReference type="Pfam" id="PF06929">
    <property type="entry name" value="Rotavirus_VP3"/>
    <property type="match status" value="1"/>
</dbReference>
<dbReference type="PIRSF" id="PIRSF004015">
    <property type="entry name" value="LigT_rotavirus"/>
    <property type="match status" value="1"/>
</dbReference>
<dbReference type="PROSITE" id="PS51589">
    <property type="entry name" value="SAM_MT56_VP3"/>
    <property type="match status" value="1"/>
</dbReference>
<accession>B2BMF9</accession>